<protein>
    <recommendedName>
        <fullName>Protein Tat</fullName>
    </recommendedName>
    <alternativeName>
        <fullName>Transactivating regulatory protein</fullName>
    </alternativeName>
</protein>
<name>TAT_HV2RO</name>
<comment type="function">
    <text evidence="2">Transcriptional activator that increases RNA Pol II processivity, thereby increasing the level of full-length viral transcripts. Recognizes a hairpin structure at the 5'-LTR of the nascent viral mRNAs referred to as the transactivation responsive RNA element (TAR) and recruits the cyclin T1-CDK9 complex (P-TEFb complex) that will in turn hyperphosphorylate the RNA polymerase II to allow efficient elongation. The CDK9 component of P-TEFb and other Tat-activated kinases hyperphosphorylate the C-terminus of RNA Pol II that becomes stabilized and much more processive.</text>
</comment>
<comment type="function">
    <text evidence="1">Extracellular circulating Tat can be endocytosed by surrounding uninfected cells via the binding to several surface receptors. Endosomal low pH allows Tat to cross the endosome membrane to enter the cytosol and eventually further translocate into the nucleus, thereby inducing severe cell dysfunctions ranging from cell activation to cell death. Through (By similarity).</text>
</comment>
<comment type="subunit">
    <text evidence="1">Interacts with host CCNT1. Associates with the P-TEFb complex composed at least of Tat, P-TEFb (CDK9 and CCNT1), TAR RNA, RNA Pol II. Interacts with CCNT2; the resulting complex is unable to bind to TAR RNA (By similarity).</text>
</comment>
<comment type="subcellular location">
    <subcellularLocation>
        <location evidence="1">Host nucleus</location>
        <location evidence="1">Host nucleolus</location>
    </subcellularLocation>
</comment>
<comment type="alternative products">
    <event type="alternative splicing"/>
    <isoform>
        <id>P04605-1</id>
        <name>Long</name>
        <sequence type="displayed"/>
    </isoform>
    <isoform>
        <id>P04605-2</id>
        <name>Short</name>
        <sequence type="described" ref="VSP_022444"/>
    </isoform>
</comment>
<comment type="domain">
    <text evidence="1">The Arg-rich RNA-binding region binds the TAR RNA. This region also mediates the nuclear localization (By similarity).</text>
</comment>
<comment type="PTM">
    <text evidence="1">The phosphorylation by CDK9 does not seem to be important for transactivation function.</text>
</comment>
<comment type="miscellaneous">
    <molecule>Isoform Short</molecule>
    <text evidence="5">Expressed in the late stage of the infection cycle, when unspliced viral RNAs are exported to the cytoplasm by the viral Rev protein.</text>
</comment>
<comment type="similarity">
    <text evidence="5">Belongs to the lentiviruses Tat family.</text>
</comment>
<feature type="chain" id="PRO_0000085374" description="Protein Tat">
    <location>
        <begin position="1"/>
        <end position="130"/>
    </location>
</feature>
<feature type="region of interest" description="Disordered" evidence="3">
    <location>
        <begin position="1"/>
        <end position="29"/>
    </location>
</feature>
<feature type="region of interest" description="Cysteine-rich" evidence="1">
    <location>
        <begin position="50"/>
        <end position="66"/>
    </location>
</feature>
<feature type="region of interest" description="Core" evidence="1">
    <location>
        <begin position="67"/>
        <end position="77"/>
    </location>
</feature>
<feature type="region of interest" description="Disordered" evidence="3">
    <location>
        <begin position="79"/>
        <end position="130"/>
    </location>
</feature>
<feature type="short sequence motif" description="Nuclear localization signal, and RNA-binding (TAR)" evidence="1">
    <location>
        <begin position="78"/>
        <end position="90"/>
    </location>
</feature>
<feature type="compositionally biased region" description="Polar residues" evidence="3">
    <location>
        <begin position="11"/>
        <end position="28"/>
    </location>
</feature>
<feature type="compositionally biased region" description="Basic residues" evidence="3">
    <location>
        <begin position="79"/>
        <end position="91"/>
    </location>
</feature>
<feature type="compositionally biased region" description="Polar residues" evidence="3">
    <location>
        <begin position="99"/>
        <end position="111"/>
    </location>
</feature>
<feature type="modified residue" description="Phosphothreonine; by host CDK9" evidence="1">
    <location>
        <position position="85"/>
    </location>
</feature>
<feature type="modified residue" description="Phosphothreonine; by host CDK9" evidence="1">
    <location>
        <position position="89"/>
    </location>
</feature>
<feature type="modified residue" description="Phosphoserine; by host CDK9" evidence="1">
    <location>
        <position position="94"/>
    </location>
</feature>
<feature type="splice variant" id="VSP_022444" description="In isoform Short." evidence="5">
    <location>
        <begin position="100"/>
        <end position="130"/>
    </location>
</feature>
<feature type="mutagenesis site" description="Loss of binding to cyclin T." evidence="4">
    <original>C</original>
    <variation>S</variation>
    <location>
        <position position="50"/>
    </location>
</feature>
<organism>
    <name type="scientific">Human immunodeficiency virus type 2 subtype A (isolate ROD)</name>
    <name type="common">HIV-2</name>
    <dbReference type="NCBI Taxonomy" id="11720"/>
    <lineage>
        <taxon>Viruses</taxon>
        <taxon>Riboviria</taxon>
        <taxon>Pararnavirae</taxon>
        <taxon>Artverviricota</taxon>
        <taxon>Revtraviricetes</taxon>
        <taxon>Ortervirales</taxon>
        <taxon>Retroviridae</taxon>
        <taxon>Orthoretrovirinae</taxon>
        <taxon>Lentivirus</taxon>
        <taxon>Human immunodeficiency virus 2</taxon>
    </lineage>
</organism>
<accession>P04605</accession>
<dbReference type="EMBL" id="M15390">
    <property type="protein sequence ID" value="AAB00768.1"/>
    <property type="molecule type" value="Genomic_DNA"/>
</dbReference>
<dbReference type="EMBL" id="X05291">
    <property type="protein sequence ID" value="CAA28912.1"/>
    <property type="molecule type" value="Genomic_RNA"/>
</dbReference>
<dbReference type="PIR" id="E26262">
    <property type="entry name" value="TNLJG2"/>
</dbReference>
<dbReference type="Proteomes" id="UP000007426">
    <property type="component" value="Genome"/>
</dbReference>
<dbReference type="Proteomes" id="UP000246871">
    <property type="component" value="Segment"/>
</dbReference>
<dbReference type="GO" id="GO:0044196">
    <property type="term" value="C:host cell nucleolus"/>
    <property type="evidence" value="ECO:0007669"/>
    <property type="project" value="UniProtKB-SubCell"/>
</dbReference>
<dbReference type="GO" id="GO:0003723">
    <property type="term" value="F:RNA binding"/>
    <property type="evidence" value="ECO:0007669"/>
    <property type="project" value="UniProtKB-KW"/>
</dbReference>
<dbReference type="GO" id="GO:0001070">
    <property type="term" value="F:RNA-binding transcription regulator activity"/>
    <property type="evidence" value="ECO:0007669"/>
    <property type="project" value="InterPro"/>
</dbReference>
<dbReference type="GO" id="GO:0050434">
    <property type="term" value="P:positive regulation of viral transcription"/>
    <property type="evidence" value="ECO:0007669"/>
    <property type="project" value="InterPro"/>
</dbReference>
<dbReference type="Gene3D" id="4.10.20.10">
    <property type="entry name" value="Tat domain"/>
    <property type="match status" value="1"/>
</dbReference>
<dbReference type="InterPro" id="IPR001831">
    <property type="entry name" value="IV_Tat"/>
</dbReference>
<dbReference type="InterPro" id="IPR036963">
    <property type="entry name" value="Tat_dom_sf"/>
</dbReference>
<dbReference type="Pfam" id="PF00539">
    <property type="entry name" value="Tat"/>
    <property type="match status" value="1"/>
</dbReference>
<dbReference type="PRINTS" id="PR00055">
    <property type="entry name" value="HIVTATDOMAIN"/>
</dbReference>
<sequence>METPLKAPESSLKSCNEPFSRTSEQDVATQELARQGEEILSQLYRPLETCNNSCYCKRCCYHCQMCFLNKGLGICYERKGRRRRTPKKTKTHPSPTPDKSISTRTGDSQPTKKQKKTVEATVETDTGPGR</sequence>
<proteinExistence type="evidence at protein level"/>
<organismHost>
    <name type="scientific">Homo sapiens</name>
    <name type="common">Human</name>
    <dbReference type="NCBI Taxonomy" id="9606"/>
</organismHost>
<reference key="1">
    <citation type="journal article" date="1987" name="Nature">
        <title>Genome organization and transactivation of the human immunodeficiency virus type 2.</title>
        <authorList>
            <person name="Guyader M."/>
            <person name="Emerman M."/>
            <person name="Sonigo P."/>
            <person name="Clavel F."/>
            <person name="Montagnier L."/>
            <person name="Alizon M."/>
        </authorList>
    </citation>
    <scope>NUCLEOTIDE SEQUENCE [GENOMIC DNA]</scope>
</reference>
<reference key="2">
    <citation type="journal article" date="1997" name="J. Virol.">
        <title>The sequence and structure of the 3' arm of the first stem-loop of the human immunodeficiency virus type 2 trans-activation responsive region mediate Tat-2 transactivation.</title>
        <authorList>
            <person name="Browning C."/>
            <person name="Hilfinger J.M."/>
            <person name="Rainier S."/>
            <person name="Lin V."/>
            <person name="Hedderwick S."/>
            <person name="Smith M."/>
            <person name="Markovitz D.M."/>
        </authorList>
    </citation>
    <scope>FUNCTION</scope>
</reference>
<reference key="3">
    <citation type="journal article" date="1999" name="J. Virol.">
        <title>Analysis of the effect of natural sequence variation in Tat and in cyclin T on the formation and RNA binding properties of Tat-cyclin T complexes.</title>
        <authorList>
            <person name="Bieniasz P.D."/>
            <person name="Grdina T.A."/>
            <person name="Bogerd H.P."/>
            <person name="Cullen B.R."/>
        </authorList>
    </citation>
    <scope>FUNCTION</scope>
    <scope>INTERACTION WITH HUMAN CCNT1 AND CCNT2</scope>
    <scope>MUTAGENESIS OF CYS-50</scope>
</reference>
<reference key="4">
    <citation type="journal article" date="2005" name="Microbes Infect.">
        <title>Decoding Tat: the biology of HIV Tat posttranslational modifications.</title>
        <authorList>
            <person name="Hetzer C."/>
            <person name="Dormeyer W."/>
            <person name="Schnolzer M."/>
            <person name="Ott M."/>
        </authorList>
    </citation>
    <scope>REVIEW</scope>
    <scope>ALTERNATIVE SPLICING</scope>
</reference>
<keyword id="KW-0010">Activator</keyword>
<keyword id="KW-0014">AIDS</keyword>
<keyword id="KW-0025">Alternative splicing</keyword>
<keyword id="KW-1048">Host nucleus</keyword>
<keyword id="KW-0945">Host-virus interaction</keyword>
<keyword id="KW-0597">Phosphoprotein</keyword>
<keyword id="KW-0694">RNA-binding</keyword>
<keyword id="KW-0804">Transcription</keyword>
<keyword id="KW-0805">Transcription regulation</keyword>
<evidence type="ECO:0000250" key="1"/>
<evidence type="ECO:0000250" key="2">
    <source>
        <dbReference type="UniProtKB" id="P04608"/>
    </source>
</evidence>
<evidence type="ECO:0000256" key="3">
    <source>
        <dbReference type="SAM" id="MobiDB-lite"/>
    </source>
</evidence>
<evidence type="ECO:0000269" key="4">
    <source>
    </source>
</evidence>
<evidence type="ECO:0000305" key="5"/>
<gene>
    <name type="primary">tat</name>
</gene>